<name>RS3_POLAQ</name>
<proteinExistence type="inferred from homology"/>
<keyword id="KW-1185">Reference proteome</keyword>
<keyword id="KW-0687">Ribonucleoprotein</keyword>
<keyword id="KW-0689">Ribosomal protein</keyword>
<keyword id="KW-0694">RNA-binding</keyword>
<keyword id="KW-0699">rRNA-binding</keyword>
<reference key="1">
    <citation type="journal article" date="2012" name="Stand. Genomic Sci.">
        <title>Complete genome sequence of Polynucleobacter necessarius subsp. asymbioticus type strain (QLW-P1DMWA-1(T)).</title>
        <authorList>
            <person name="Meincke L."/>
            <person name="Copeland A."/>
            <person name="Lapidus A."/>
            <person name="Lucas S."/>
            <person name="Berry K.W."/>
            <person name="Del Rio T.G."/>
            <person name="Hammon N."/>
            <person name="Dalin E."/>
            <person name="Tice H."/>
            <person name="Pitluck S."/>
            <person name="Richardson P."/>
            <person name="Bruce D."/>
            <person name="Goodwin L."/>
            <person name="Han C."/>
            <person name="Tapia R."/>
            <person name="Detter J.C."/>
            <person name="Schmutz J."/>
            <person name="Brettin T."/>
            <person name="Larimer F."/>
            <person name="Land M."/>
            <person name="Hauser L."/>
            <person name="Kyrpides N.C."/>
            <person name="Ivanova N."/>
            <person name="Goker M."/>
            <person name="Woyke T."/>
            <person name="Wu Q.L."/>
            <person name="Pockl M."/>
            <person name="Hahn M.W."/>
            <person name="Klenk H.P."/>
        </authorList>
    </citation>
    <scope>NUCLEOTIDE SEQUENCE [LARGE SCALE GENOMIC DNA]</scope>
    <source>
        <strain>DSM 18221 / CIP 109841 / QLW-P1DMWA-1</strain>
    </source>
</reference>
<sequence length="275" mass="30623">MGQKINPTGFRLAVTKNWTSRWYANNTDFAKMLKEDVDVRIYLKKKLKNASVSKVVIERPAKNARITIYSSRPGVVIGKKGEDIEVLRRELQKRMGVPVHVNIEEIRKPEVDAQLIADSITQQLEKRIMFRRAMKRAMQNAMRLGAQGIKIMSSGRLNGAEIARREWYREGRVPLHTLKADIDYATSEAETTYGIIGVKVWVYKGDTLGRGAEAQAAATSAEPAAEEKKTRRAPSKTAARKPAAGTDKPLVAAKPAVKRVRKVETPAADTQKSGE</sequence>
<dbReference type="EMBL" id="CP000655">
    <property type="protein sequence ID" value="ABP33281.1"/>
    <property type="molecule type" value="Genomic_DNA"/>
</dbReference>
<dbReference type="RefSeq" id="WP_011901906.1">
    <property type="nucleotide sequence ID" value="NC_009379.1"/>
</dbReference>
<dbReference type="SMR" id="A4SUW7"/>
<dbReference type="GeneID" id="31480405"/>
<dbReference type="KEGG" id="pnu:Pnuc_0059"/>
<dbReference type="eggNOG" id="COG0092">
    <property type="taxonomic scope" value="Bacteria"/>
</dbReference>
<dbReference type="HOGENOM" id="CLU_058591_0_1_4"/>
<dbReference type="Proteomes" id="UP000000231">
    <property type="component" value="Chromosome"/>
</dbReference>
<dbReference type="GO" id="GO:0022627">
    <property type="term" value="C:cytosolic small ribosomal subunit"/>
    <property type="evidence" value="ECO:0007669"/>
    <property type="project" value="TreeGrafter"/>
</dbReference>
<dbReference type="GO" id="GO:0003729">
    <property type="term" value="F:mRNA binding"/>
    <property type="evidence" value="ECO:0007669"/>
    <property type="project" value="UniProtKB-UniRule"/>
</dbReference>
<dbReference type="GO" id="GO:0019843">
    <property type="term" value="F:rRNA binding"/>
    <property type="evidence" value="ECO:0007669"/>
    <property type="project" value="UniProtKB-UniRule"/>
</dbReference>
<dbReference type="GO" id="GO:0003735">
    <property type="term" value="F:structural constituent of ribosome"/>
    <property type="evidence" value="ECO:0007669"/>
    <property type="project" value="InterPro"/>
</dbReference>
<dbReference type="GO" id="GO:0006412">
    <property type="term" value="P:translation"/>
    <property type="evidence" value="ECO:0007669"/>
    <property type="project" value="UniProtKB-UniRule"/>
</dbReference>
<dbReference type="CDD" id="cd02412">
    <property type="entry name" value="KH-II_30S_S3"/>
    <property type="match status" value="1"/>
</dbReference>
<dbReference type="FunFam" id="3.30.1140.32:FF:000006">
    <property type="entry name" value="30S ribosomal protein S3"/>
    <property type="match status" value="1"/>
</dbReference>
<dbReference type="FunFam" id="3.30.300.20:FF:000001">
    <property type="entry name" value="30S ribosomal protein S3"/>
    <property type="match status" value="1"/>
</dbReference>
<dbReference type="Gene3D" id="3.30.300.20">
    <property type="match status" value="1"/>
</dbReference>
<dbReference type="Gene3D" id="3.30.1140.32">
    <property type="entry name" value="Ribosomal protein S3, C-terminal domain"/>
    <property type="match status" value="1"/>
</dbReference>
<dbReference type="HAMAP" id="MF_01309_B">
    <property type="entry name" value="Ribosomal_uS3_B"/>
    <property type="match status" value="1"/>
</dbReference>
<dbReference type="InterPro" id="IPR004087">
    <property type="entry name" value="KH_dom"/>
</dbReference>
<dbReference type="InterPro" id="IPR015946">
    <property type="entry name" value="KH_dom-like_a/b"/>
</dbReference>
<dbReference type="InterPro" id="IPR004044">
    <property type="entry name" value="KH_dom_type_2"/>
</dbReference>
<dbReference type="InterPro" id="IPR009019">
    <property type="entry name" value="KH_sf_prok-type"/>
</dbReference>
<dbReference type="InterPro" id="IPR036419">
    <property type="entry name" value="Ribosomal_S3_C_sf"/>
</dbReference>
<dbReference type="InterPro" id="IPR005704">
    <property type="entry name" value="Ribosomal_uS3_bac-typ"/>
</dbReference>
<dbReference type="InterPro" id="IPR001351">
    <property type="entry name" value="Ribosomal_uS3_C"/>
</dbReference>
<dbReference type="InterPro" id="IPR018280">
    <property type="entry name" value="Ribosomal_uS3_CS"/>
</dbReference>
<dbReference type="NCBIfam" id="TIGR01009">
    <property type="entry name" value="rpsC_bact"/>
    <property type="match status" value="1"/>
</dbReference>
<dbReference type="PANTHER" id="PTHR11760">
    <property type="entry name" value="30S/40S RIBOSOMAL PROTEIN S3"/>
    <property type="match status" value="1"/>
</dbReference>
<dbReference type="PANTHER" id="PTHR11760:SF19">
    <property type="entry name" value="SMALL RIBOSOMAL SUBUNIT PROTEIN US3C"/>
    <property type="match status" value="1"/>
</dbReference>
<dbReference type="Pfam" id="PF07650">
    <property type="entry name" value="KH_2"/>
    <property type="match status" value="1"/>
</dbReference>
<dbReference type="Pfam" id="PF00189">
    <property type="entry name" value="Ribosomal_S3_C"/>
    <property type="match status" value="1"/>
</dbReference>
<dbReference type="SMART" id="SM00322">
    <property type="entry name" value="KH"/>
    <property type="match status" value="1"/>
</dbReference>
<dbReference type="SUPFAM" id="SSF54814">
    <property type="entry name" value="Prokaryotic type KH domain (KH-domain type II)"/>
    <property type="match status" value="1"/>
</dbReference>
<dbReference type="SUPFAM" id="SSF54821">
    <property type="entry name" value="Ribosomal protein S3 C-terminal domain"/>
    <property type="match status" value="1"/>
</dbReference>
<dbReference type="PROSITE" id="PS50823">
    <property type="entry name" value="KH_TYPE_2"/>
    <property type="match status" value="1"/>
</dbReference>
<dbReference type="PROSITE" id="PS00548">
    <property type="entry name" value="RIBOSOMAL_S3"/>
    <property type="match status" value="1"/>
</dbReference>
<protein>
    <recommendedName>
        <fullName evidence="1">Small ribosomal subunit protein uS3</fullName>
    </recommendedName>
    <alternativeName>
        <fullName evidence="3">30S ribosomal protein S3</fullName>
    </alternativeName>
</protein>
<accession>A4SUW7</accession>
<evidence type="ECO:0000255" key="1">
    <source>
        <dbReference type="HAMAP-Rule" id="MF_01309"/>
    </source>
</evidence>
<evidence type="ECO:0000256" key="2">
    <source>
        <dbReference type="SAM" id="MobiDB-lite"/>
    </source>
</evidence>
<evidence type="ECO:0000305" key="3"/>
<organism>
    <name type="scientific">Polynucleobacter asymbioticus (strain DSM 18221 / CIP 109841 / QLW-P1DMWA-1)</name>
    <name type="common">Polynucleobacter necessarius subsp. asymbioticus</name>
    <dbReference type="NCBI Taxonomy" id="312153"/>
    <lineage>
        <taxon>Bacteria</taxon>
        <taxon>Pseudomonadati</taxon>
        <taxon>Pseudomonadota</taxon>
        <taxon>Betaproteobacteria</taxon>
        <taxon>Burkholderiales</taxon>
        <taxon>Burkholderiaceae</taxon>
        <taxon>Polynucleobacter</taxon>
    </lineage>
</organism>
<comment type="function">
    <text evidence="1">Binds the lower part of the 30S subunit head. Binds mRNA in the 70S ribosome, positioning it for translation.</text>
</comment>
<comment type="subunit">
    <text evidence="1">Part of the 30S ribosomal subunit. Forms a tight complex with proteins S10 and S14.</text>
</comment>
<comment type="similarity">
    <text evidence="1">Belongs to the universal ribosomal protein uS3 family.</text>
</comment>
<feature type="chain" id="PRO_1000086142" description="Small ribosomal subunit protein uS3">
    <location>
        <begin position="1"/>
        <end position="275"/>
    </location>
</feature>
<feature type="domain" description="KH type-2" evidence="1">
    <location>
        <begin position="39"/>
        <end position="107"/>
    </location>
</feature>
<feature type="region of interest" description="Disordered" evidence="2">
    <location>
        <begin position="216"/>
        <end position="275"/>
    </location>
</feature>
<gene>
    <name evidence="1" type="primary">rpsC</name>
    <name type="ordered locus">Pnuc_0059</name>
</gene>